<protein>
    <recommendedName>
        <fullName evidence="1">Asparagine--tRNA ligase</fullName>
        <ecNumber evidence="1">6.1.1.22</ecNumber>
    </recommendedName>
    <alternativeName>
        <fullName evidence="1">Asparaginyl-tRNA synthetase</fullName>
        <shortName evidence="1">AsnRS</shortName>
    </alternativeName>
</protein>
<comment type="catalytic activity">
    <reaction evidence="1">
        <text>tRNA(Asn) + L-asparagine + ATP = L-asparaginyl-tRNA(Asn) + AMP + diphosphate + H(+)</text>
        <dbReference type="Rhea" id="RHEA:11180"/>
        <dbReference type="Rhea" id="RHEA-COMP:9659"/>
        <dbReference type="Rhea" id="RHEA-COMP:9674"/>
        <dbReference type="ChEBI" id="CHEBI:15378"/>
        <dbReference type="ChEBI" id="CHEBI:30616"/>
        <dbReference type="ChEBI" id="CHEBI:33019"/>
        <dbReference type="ChEBI" id="CHEBI:58048"/>
        <dbReference type="ChEBI" id="CHEBI:78442"/>
        <dbReference type="ChEBI" id="CHEBI:78515"/>
        <dbReference type="ChEBI" id="CHEBI:456215"/>
        <dbReference type="EC" id="6.1.1.22"/>
    </reaction>
</comment>
<comment type="subunit">
    <text evidence="1">Homodimer.</text>
</comment>
<comment type="subcellular location">
    <subcellularLocation>
        <location evidence="1">Cytoplasm</location>
    </subcellularLocation>
</comment>
<comment type="similarity">
    <text evidence="1">Belongs to the class-II aminoacyl-tRNA synthetase family.</text>
</comment>
<evidence type="ECO:0000255" key="1">
    <source>
        <dbReference type="HAMAP-Rule" id="MF_00534"/>
    </source>
</evidence>
<keyword id="KW-0030">Aminoacyl-tRNA synthetase</keyword>
<keyword id="KW-0067">ATP-binding</keyword>
<keyword id="KW-0963">Cytoplasm</keyword>
<keyword id="KW-0436">Ligase</keyword>
<keyword id="KW-0547">Nucleotide-binding</keyword>
<keyword id="KW-0648">Protein biosynthesis</keyword>
<proteinExistence type="inferred from homology"/>
<feature type="chain" id="PRO_0000176386" description="Asparagine--tRNA ligase">
    <location>
        <begin position="1"/>
        <end position="463"/>
    </location>
</feature>
<reference key="1">
    <citation type="journal article" date="2004" name="Nucleic Acids Res.">
        <title>The genome sequence of Bacillus cereus ATCC 10987 reveals metabolic adaptations and a large plasmid related to Bacillus anthracis pXO1.</title>
        <authorList>
            <person name="Rasko D.A."/>
            <person name="Ravel J."/>
            <person name="Oekstad O.A."/>
            <person name="Helgason E."/>
            <person name="Cer R.Z."/>
            <person name="Jiang L."/>
            <person name="Shores K.A."/>
            <person name="Fouts D.E."/>
            <person name="Tourasse N.J."/>
            <person name="Angiuoli S.V."/>
            <person name="Kolonay J.F."/>
            <person name="Nelson W.C."/>
            <person name="Kolstoe A.-B."/>
            <person name="Fraser C.M."/>
            <person name="Read T.D."/>
        </authorList>
    </citation>
    <scope>NUCLEOTIDE SEQUENCE [LARGE SCALE GENOMIC DNA]</scope>
    <source>
        <strain>ATCC 10987 / NRS 248</strain>
    </source>
</reference>
<organism>
    <name type="scientific">Bacillus cereus (strain ATCC 10987 / NRS 248)</name>
    <dbReference type="NCBI Taxonomy" id="222523"/>
    <lineage>
        <taxon>Bacteria</taxon>
        <taxon>Bacillati</taxon>
        <taxon>Bacillota</taxon>
        <taxon>Bacilli</taxon>
        <taxon>Bacillales</taxon>
        <taxon>Bacillaceae</taxon>
        <taxon>Bacillus</taxon>
        <taxon>Bacillus cereus group</taxon>
    </lineage>
</organism>
<gene>
    <name evidence="1" type="primary">asnS</name>
    <name type="ordered locus">BCE_4685</name>
</gene>
<accession>Q72ZI3</accession>
<dbReference type="EC" id="6.1.1.22" evidence="1"/>
<dbReference type="EMBL" id="AE017194">
    <property type="protein sequence ID" value="AAS43586.1"/>
    <property type="molecule type" value="Genomic_DNA"/>
</dbReference>
<dbReference type="SMR" id="Q72ZI3"/>
<dbReference type="KEGG" id="bca:BCE_4685"/>
<dbReference type="HOGENOM" id="CLU_004553_2_0_9"/>
<dbReference type="Proteomes" id="UP000002527">
    <property type="component" value="Chromosome"/>
</dbReference>
<dbReference type="GO" id="GO:0005737">
    <property type="term" value="C:cytoplasm"/>
    <property type="evidence" value="ECO:0007669"/>
    <property type="project" value="UniProtKB-SubCell"/>
</dbReference>
<dbReference type="GO" id="GO:0004816">
    <property type="term" value="F:asparagine-tRNA ligase activity"/>
    <property type="evidence" value="ECO:0007669"/>
    <property type="project" value="UniProtKB-UniRule"/>
</dbReference>
<dbReference type="GO" id="GO:0005524">
    <property type="term" value="F:ATP binding"/>
    <property type="evidence" value="ECO:0007669"/>
    <property type="project" value="UniProtKB-UniRule"/>
</dbReference>
<dbReference type="GO" id="GO:0140096">
    <property type="term" value="F:catalytic activity, acting on a protein"/>
    <property type="evidence" value="ECO:0007669"/>
    <property type="project" value="UniProtKB-ARBA"/>
</dbReference>
<dbReference type="GO" id="GO:0003676">
    <property type="term" value="F:nucleic acid binding"/>
    <property type="evidence" value="ECO:0007669"/>
    <property type="project" value="InterPro"/>
</dbReference>
<dbReference type="GO" id="GO:0016740">
    <property type="term" value="F:transferase activity"/>
    <property type="evidence" value="ECO:0007669"/>
    <property type="project" value="UniProtKB-ARBA"/>
</dbReference>
<dbReference type="GO" id="GO:0006421">
    <property type="term" value="P:asparaginyl-tRNA aminoacylation"/>
    <property type="evidence" value="ECO:0007669"/>
    <property type="project" value="UniProtKB-UniRule"/>
</dbReference>
<dbReference type="CDD" id="cd00776">
    <property type="entry name" value="AsxRS_core"/>
    <property type="match status" value="1"/>
</dbReference>
<dbReference type="CDD" id="cd04318">
    <property type="entry name" value="EcAsnRS_like_N"/>
    <property type="match status" value="1"/>
</dbReference>
<dbReference type="FunFam" id="3.30.930.10:FF:000016">
    <property type="entry name" value="Asparagine--tRNA ligase"/>
    <property type="match status" value="1"/>
</dbReference>
<dbReference type="Gene3D" id="3.30.930.10">
    <property type="entry name" value="Bira Bifunctional Protein, Domain 2"/>
    <property type="match status" value="1"/>
</dbReference>
<dbReference type="Gene3D" id="2.40.50.140">
    <property type="entry name" value="Nucleic acid-binding proteins"/>
    <property type="match status" value="1"/>
</dbReference>
<dbReference type="HAMAP" id="MF_00534">
    <property type="entry name" value="Asn_tRNA_synth"/>
    <property type="match status" value="1"/>
</dbReference>
<dbReference type="InterPro" id="IPR004364">
    <property type="entry name" value="Aa-tRNA-synt_II"/>
</dbReference>
<dbReference type="InterPro" id="IPR006195">
    <property type="entry name" value="aa-tRNA-synth_II"/>
</dbReference>
<dbReference type="InterPro" id="IPR045864">
    <property type="entry name" value="aa-tRNA-synth_II/BPL/LPL"/>
</dbReference>
<dbReference type="InterPro" id="IPR004522">
    <property type="entry name" value="Asn-tRNA-ligase"/>
</dbReference>
<dbReference type="InterPro" id="IPR002312">
    <property type="entry name" value="Asp/Asn-tRNA-synth_IIb"/>
</dbReference>
<dbReference type="InterPro" id="IPR012340">
    <property type="entry name" value="NA-bd_OB-fold"/>
</dbReference>
<dbReference type="InterPro" id="IPR004365">
    <property type="entry name" value="NA-bd_OB_tRNA"/>
</dbReference>
<dbReference type="NCBIfam" id="TIGR00457">
    <property type="entry name" value="asnS"/>
    <property type="match status" value="1"/>
</dbReference>
<dbReference type="NCBIfam" id="NF003037">
    <property type="entry name" value="PRK03932.1"/>
    <property type="match status" value="1"/>
</dbReference>
<dbReference type="PANTHER" id="PTHR22594:SF34">
    <property type="entry name" value="ASPARAGINE--TRNA LIGASE, MITOCHONDRIAL-RELATED"/>
    <property type="match status" value="1"/>
</dbReference>
<dbReference type="PANTHER" id="PTHR22594">
    <property type="entry name" value="ASPARTYL/LYSYL-TRNA SYNTHETASE"/>
    <property type="match status" value="1"/>
</dbReference>
<dbReference type="Pfam" id="PF00152">
    <property type="entry name" value="tRNA-synt_2"/>
    <property type="match status" value="1"/>
</dbReference>
<dbReference type="Pfam" id="PF01336">
    <property type="entry name" value="tRNA_anti-codon"/>
    <property type="match status" value="1"/>
</dbReference>
<dbReference type="PRINTS" id="PR01042">
    <property type="entry name" value="TRNASYNTHASP"/>
</dbReference>
<dbReference type="SUPFAM" id="SSF55681">
    <property type="entry name" value="Class II aaRS and biotin synthetases"/>
    <property type="match status" value="1"/>
</dbReference>
<dbReference type="SUPFAM" id="SSF50249">
    <property type="entry name" value="Nucleic acid-binding proteins"/>
    <property type="match status" value="1"/>
</dbReference>
<dbReference type="PROSITE" id="PS50862">
    <property type="entry name" value="AA_TRNA_LIGASE_II"/>
    <property type="match status" value="1"/>
</dbReference>
<sequence length="463" mass="52954">MENTLVKSLYRDTDKYAGQTVQVSGWIRNLRDSKAFGFIELNDGSFFKSVQIVFDTELDNFKEIAKLPLSSSVKVEGKVIVTPGAKQPFEIKAEKIDIEGLSDSDYPLQKKRHTFEYLRTIAHLRPRTNAFSATFRVRSIAAFAIHQFFQERGFVHVHTPIITGSDTEGAGEMFRVTTQDLNNVPKGEDGQVDESKDFFGKETNLTVSGQLNAEAYALAFRDVYTFGPTFRAENSNTTRHAAEFWMVEPEIAFAELGDVMNLTEDMLKYAMKYVLEHAPEEMEFFNSFVDKTVLERMNNVINSDFGRITYTEAIKVLQESGADFKYPVEWGIDLQTEHERYLSEEIFKRPVFVTDYPKDIKAFYMRLNDDGKTVAATDLLVPGIGELIGGSQREERMDVLVDRIKELGMNEEDYWWYLELRKYGGTKHAGFGLGFERFLMYITGMANIRDVIPFPRTPGSSEF</sequence>
<name>SYN_BACC1</name>